<organism>
    <name type="scientific">Treponema pallidum (strain Nichols)</name>
    <dbReference type="NCBI Taxonomy" id="243276"/>
    <lineage>
        <taxon>Bacteria</taxon>
        <taxon>Pseudomonadati</taxon>
        <taxon>Spirochaetota</taxon>
        <taxon>Spirochaetia</taxon>
        <taxon>Spirochaetales</taxon>
        <taxon>Treponemataceae</taxon>
        <taxon>Treponema</taxon>
    </lineage>
</organism>
<name>5NTD_TREPA</name>
<protein>
    <recommendedName>
        <fullName>Probable 5'-nucleotidase</fullName>
        <ecNumber>3.1.3.5</ecNumber>
    </recommendedName>
</protein>
<reference key="1">
    <citation type="journal article" date="1998" name="Science">
        <title>Complete genome sequence of Treponema pallidum, the syphilis spirochete.</title>
        <authorList>
            <person name="Fraser C.M."/>
            <person name="Norris S.J."/>
            <person name="Weinstock G.M."/>
            <person name="White O."/>
            <person name="Sutton G.G."/>
            <person name="Dodson R.J."/>
            <person name="Gwinn M.L."/>
            <person name="Hickey E.K."/>
            <person name="Clayton R.A."/>
            <person name="Ketchum K.A."/>
            <person name="Sodergren E."/>
            <person name="Hardham J.M."/>
            <person name="McLeod M.P."/>
            <person name="Salzberg S.L."/>
            <person name="Peterson J.D."/>
            <person name="Khalak H.G."/>
            <person name="Richardson D.L."/>
            <person name="Howell J.K."/>
            <person name="Chidambaram M."/>
            <person name="Utterback T.R."/>
            <person name="McDonald L.A."/>
            <person name="Artiach P."/>
            <person name="Bowman C."/>
            <person name="Cotton M.D."/>
            <person name="Fujii C."/>
            <person name="Garland S.A."/>
            <person name="Hatch B."/>
            <person name="Horst K."/>
            <person name="Roberts K.M."/>
            <person name="Sandusky M."/>
            <person name="Weidman J.F."/>
            <person name="Smith H.O."/>
            <person name="Venter J.C."/>
        </authorList>
    </citation>
    <scope>NUCLEOTIDE SEQUENCE [LARGE SCALE GENOMIC DNA]</scope>
    <source>
        <strain>Nichols</strain>
    </source>
</reference>
<dbReference type="EC" id="3.1.3.5"/>
<dbReference type="EMBL" id="AE000520">
    <property type="protein sequence ID" value="AAC26552.1"/>
    <property type="molecule type" value="Genomic_DNA"/>
</dbReference>
<dbReference type="PIR" id="E71365">
    <property type="entry name" value="E71365"/>
</dbReference>
<dbReference type="SMR" id="O83142"/>
<dbReference type="IntAct" id="O83142">
    <property type="interactions" value="11"/>
</dbReference>
<dbReference type="STRING" id="243276.TP_0104"/>
<dbReference type="EnsemblBacteria" id="AAC26552">
    <property type="protein sequence ID" value="AAC26552"/>
    <property type="gene ID" value="TP_0104"/>
</dbReference>
<dbReference type="KEGG" id="tpa:TP_0104"/>
<dbReference type="KEGG" id="tpw:TPANIC_0104"/>
<dbReference type="eggNOG" id="COG0737">
    <property type="taxonomic scope" value="Bacteria"/>
</dbReference>
<dbReference type="HOGENOM" id="CLU_005854_7_1_12"/>
<dbReference type="OrthoDB" id="9800780at2"/>
<dbReference type="Proteomes" id="UP000000811">
    <property type="component" value="Chromosome"/>
</dbReference>
<dbReference type="GO" id="GO:0030288">
    <property type="term" value="C:outer membrane-bounded periplasmic space"/>
    <property type="evidence" value="ECO:0007669"/>
    <property type="project" value="TreeGrafter"/>
</dbReference>
<dbReference type="GO" id="GO:0005886">
    <property type="term" value="C:plasma membrane"/>
    <property type="evidence" value="ECO:0007669"/>
    <property type="project" value="UniProtKB-SubCell"/>
</dbReference>
<dbReference type="GO" id="GO:0008253">
    <property type="term" value="F:5'-nucleotidase activity"/>
    <property type="evidence" value="ECO:0007669"/>
    <property type="project" value="UniProtKB-EC"/>
</dbReference>
<dbReference type="GO" id="GO:0046872">
    <property type="term" value="F:metal ion binding"/>
    <property type="evidence" value="ECO:0007669"/>
    <property type="project" value="UniProtKB-KW"/>
</dbReference>
<dbReference type="GO" id="GO:0000166">
    <property type="term" value="F:nucleotide binding"/>
    <property type="evidence" value="ECO:0007669"/>
    <property type="project" value="UniProtKB-KW"/>
</dbReference>
<dbReference type="GO" id="GO:0008768">
    <property type="term" value="F:UDP-sugar diphosphatase activity"/>
    <property type="evidence" value="ECO:0007669"/>
    <property type="project" value="TreeGrafter"/>
</dbReference>
<dbReference type="GO" id="GO:0009166">
    <property type="term" value="P:nucleotide catabolic process"/>
    <property type="evidence" value="ECO:0007669"/>
    <property type="project" value="InterPro"/>
</dbReference>
<dbReference type="CDD" id="cd07409">
    <property type="entry name" value="MPP_CD73_N"/>
    <property type="match status" value="1"/>
</dbReference>
<dbReference type="Gene3D" id="3.60.21.10">
    <property type="match status" value="1"/>
</dbReference>
<dbReference type="Gene3D" id="3.90.780.10">
    <property type="entry name" value="5'-Nucleotidase, C-terminal domain"/>
    <property type="match status" value="1"/>
</dbReference>
<dbReference type="InterPro" id="IPR008334">
    <property type="entry name" value="5'-Nucleotdase_C"/>
</dbReference>
<dbReference type="InterPro" id="IPR036907">
    <property type="entry name" value="5'-Nucleotdase_C_sf"/>
</dbReference>
<dbReference type="InterPro" id="IPR006146">
    <property type="entry name" value="5'-Nucleotdase_CS"/>
</dbReference>
<dbReference type="InterPro" id="IPR006179">
    <property type="entry name" value="5_nucleotidase/apyrase"/>
</dbReference>
<dbReference type="InterPro" id="IPR004843">
    <property type="entry name" value="Calcineurin-like_PHP_ApaH"/>
</dbReference>
<dbReference type="InterPro" id="IPR029052">
    <property type="entry name" value="Metallo-depent_PP-like"/>
</dbReference>
<dbReference type="InterPro" id="IPR006420">
    <property type="entry name" value="NadN"/>
</dbReference>
<dbReference type="NCBIfam" id="TIGR01530">
    <property type="entry name" value="nadN"/>
    <property type="match status" value="1"/>
</dbReference>
<dbReference type="PANTHER" id="PTHR11575">
    <property type="entry name" value="5'-NUCLEOTIDASE-RELATED"/>
    <property type="match status" value="1"/>
</dbReference>
<dbReference type="PANTHER" id="PTHR11575:SF46">
    <property type="entry name" value="PROTEIN USHA"/>
    <property type="match status" value="1"/>
</dbReference>
<dbReference type="Pfam" id="PF02872">
    <property type="entry name" value="5_nucleotid_C"/>
    <property type="match status" value="1"/>
</dbReference>
<dbReference type="Pfam" id="PF00149">
    <property type="entry name" value="Metallophos"/>
    <property type="match status" value="1"/>
</dbReference>
<dbReference type="PRINTS" id="PR01607">
    <property type="entry name" value="APYRASEFAMLY"/>
</dbReference>
<dbReference type="SUPFAM" id="SSF55816">
    <property type="entry name" value="5'-nucleotidase (syn. UDP-sugar hydrolase), C-terminal domain"/>
    <property type="match status" value="1"/>
</dbReference>
<dbReference type="SUPFAM" id="SSF56300">
    <property type="entry name" value="Metallo-dependent phosphatases"/>
    <property type="match status" value="1"/>
</dbReference>
<dbReference type="PROSITE" id="PS00785">
    <property type="entry name" value="5_NUCLEOTIDASE_1"/>
    <property type="match status" value="1"/>
</dbReference>
<dbReference type="PROSITE" id="PS00786">
    <property type="entry name" value="5_NUCLEOTIDASE_2"/>
    <property type="match status" value="1"/>
</dbReference>
<dbReference type="PROSITE" id="PS51257">
    <property type="entry name" value="PROKAR_LIPOPROTEIN"/>
    <property type="match status" value="1"/>
</dbReference>
<accession>O83142</accession>
<evidence type="ECO:0000250" key="1"/>
<evidence type="ECO:0000255" key="2">
    <source>
        <dbReference type="PROSITE-ProRule" id="PRU00303"/>
    </source>
</evidence>
<evidence type="ECO:0000305" key="3"/>
<gene>
    <name type="ordered locus">TP_0104</name>
</gene>
<comment type="catalytic activity">
    <reaction>
        <text>a ribonucleoside 5'-phosphate + H2O = a ribonucleoside + phosphate</text>
        <dbReference type="Rhea" id="RHEA:12484"/>
        <dbReference type="ChEBI" id="CHEBI:15377"/>
        <dbReference type="ChEBI" id="CHEBI:18254"/>
        <dbReference type="ChEBI" id="CHEBI:43474"/>
        <dbReference type="ChEBI" id="CHEBI:58043"/>
        <dbReference type="EC" id="3.1.3.5"/>
    </reaction>
</comment>
<comment type="cofactor">
    <cofactor evidence="1">
        <name>a divalent metal cation</name>
        <dbReference type="ChEBI" id="CHEBI:60240"/>
    </cofactor>
</comment>
<comment type="subcellular location">
    <subcellularLocation>
        <location evidence="2">Cell membrane</location>
        <topology evidence="2">Lipid-anchor</topology>
    </subcellularLocation>
</comment>
<comment type="similarity">
    <text evidence="3">Belongs to the 5'-nucleotidase family.</text>
</comment>
<feature type="signal peptide" evidence="2">
    <location>
        <begin position="1"/>
        <end position="21"/>
    </location>
</feature>
<feature type="chain" id="PRO_0000000027" description="Probable 5'-nucleotidase">
    <location>
        <begin position="22"/>
        <end position="593"/>
    </location>
</feature>
<feature type="binding site" evidence="1">
    <location>
        <position position="41"/>
    </location>
    <ligand>
        <name>a divalent metal cation</name>
        <dbReference type="ChEBI" id="CHEBI:60240"/>
        <label>1</label>
    </ligand>
</feature>
<feature type="binding site" evidence="1">
    <location>
        <position position="43"/>
    </location>
    <ligand>
        <name>a divalent metal cation</name>
        <dbReference type="ChEBI" id="CHEBI:60240"/>
        <label>1</label>
    </ligand>
</feature>
<feature type="binding site" evidence="1">
    <location>
        <position position="91"/>
    </location>
    <ligand>
        <name>a divalent metal cation</name>
        <dbReference type="ChEBI" id="CHEBI:60240"/>
        <label>1</label>
    </ligand>
</feature>
<feature type="binding site" evidence="1">
    <location>
        <position position="91"/>
    </location>
    <ligand>
        <name>a divalent metal cation</name>
        <dbReference type="ChEBI" id="CHEBI:60240"/>
        <label>2</label>
    </ligand>
</feature>
<feature type="binding site" evidence="1">
    <location>
        <position position="123"/>
    </location>
    <ligand>
        <name>a divalent metal cation</name>
        <dbReference type="ChEBI" id="CHEBI:60240"/>
        <label>2</label>
    </ligand>
</feature>
<feature type="binding site" evidence="1">
    <location>
        <position position="224"/>
    </location>
    <ligand>
        <name>a divalent metal cation</name>
        <dbReference type="ChEBI" id="CHEBI:60240"/>
        <label>2</label>
    </ligand>
</feature>
<feature type="binding site" evidence="1">
    <location>
        <position position="456"/>
    </location>
    <ligand>
        <name>substrate</name>
    </ligand>
</feature>
<feature type="binding site" evidence="1">
    <location>
        <begin position="539"/>
        <end position="545"/>
    </location>
    <ligand>
        <name>substrate</name>
    </ligand>
</feature>
<feature type="site" description="Transition state stabilizer" evidence="1">
    <location>
        <position position="124"/>
    </location>
</feature>
<feature type="site" description="Transition state stabilizer" evidence="1">
    <location>
        <position position="127"/>
    </location>
</feature>
<feature type="lipid moiety-binding region" description="N-palmitoyl cysteine" evidence="3">
    <location>
        <position position="22"/>
    </location>
</feature>
<feature type="lipid moiety-binding region" description="S-diacylglycerol cysteine" evidence="3">
    <location>
        <position position="22"/>
    </location>
</feature>
<proteinExistence type="inferred from homology"/>
<keyword id="KW-1003">Cell membrane</keyword>
<keyword id="KW-0378">Hydrolase</keyword>
<keyword id="KW-0449">Lipoprotein</keyword>
<keyword id="KW-0472">Membrane</keyword>
<keyword id="KW-0479">Metal-binding</keyword>
<keyword id="KW-0547">Nucleotide-binding</keyword>
<keyword id="KW-0564">Palmitate</keyword>
<keyword id="KW-1185">Reference proteome</keyword>
<keyword id="KW-0732">Signal</keyword>
<sequence length="593" mass="64871">MKRFIPHRVIHAVCIGLALVGCRKLDSRAGDFELTIIHINDHHSHLEPEPLELAVAGERLRAAVGGYAALVHEIQRLRAESKNALVLHAGDALIGTLYSTLFRGRADAVLMNHAGFDFFTLGNHEFDNGNEGLKEFLHYLEVPVLSANVVPNAASTLHGLWKPSAIVERAGERIGVIGLDTVKKTVESSSPGKDINFIDEIEAVRRATVEMQQQGVNKIILLSHAGFEKNCEIAQNISGIDVIVSGDTHYLLGDESLGRLGLPVVGEYPRKIMSPAGEPVYVVEAWEYGKCLGELNVVFDRTGVITSAVGMPRFLLHTNTLQKKGADRKNYPLEEAEREALLVALRMTPEIIFAQENDQIISVLEEFKKEKEALGAQAIGVITGASMRGGSVHRVPDAQNPQGSVATRFVAETMLSDIQSFGAGKVDCVIQNAGGARSNIQPGEITYNDAYTLLPFSNTLVLVDVSGAELKQIIEDALQFALGDGSTGAFPYGAGVRYEARQEPDEHGKRVIKLEVQKKDGAWVPVDERAPYRLGVNSYIARGKDGYKTLGEIVSTRGAEDTYLRDAESLIKFLRAHKNFRAYTDSNVIFRLK</sequence>